<accession>B6YVQ4</accession>
<reference key="1">
    <citation type="journal article" date="2008" name="J. Bacteriol.">
        <title>The complete genome sequence of Thermococcus onnurineus NA1 reveals a mixed heterotrophic and carboxydotrophic metabolism.</title>
        <authorList>
            <person name="Lee H.S."/>
            <person name="Kang S.G."/>
            <person name="Bae S.S."/>
            <person name="Lim J.K."/>
            <person name="Cho Y."/>
            <person name="Kim Y.J."/>
            <person name="Jeon J.H."/>
            <person name="Cha S.-S."/>
            <person name="Kwon K.K."/>
            <person name="Kim H.-T."/>
            <person name="Park C.-J."/>
            <person name="Lee H.-W."/>
            <person name="Kim S.I."/>
            <person name="Chun J."/>
            <person name="Colwell R.R."/>
            <person name="Kim S.-J."/>
            <person name="Lee J.-H."/>
        </authorList>
    </citation>
    <scope>NUCLEOTIDE SEQUENCE [LARGE SCALE GENOMIC DNA]</scope>
    <source>
        <strain>NA1</strain>
    </source>
</reference>
<protein>
    <recommendedName>
        <fullName evidence="1">Quinolinate synthase</fullName>
        <ecNumber evidence="1">2.5.1.72</ecNumber>
    </recommendedName>
</protein>
<keyword id="KW-0004">4Fe-4S</keyword>
<keyword id="KW-0963">Cytoplasm</keyword>
<keyword id="KW-0408">Iron</keyword>
<keyword id="KW-0411">Iron-sulfur</keyword>
<keyword id="KW-0479">Metal-binding</keyword>
<keyword id="KW-0662">Pyridine nucleotide biosynthesis</keyword>
<keyword id="KW-0808">Transferase</keyword>
<gene>
    <name evidence="1" type="primary">nadA</name>
    <name type="ordered locus">TON_1887</name>
</gene>
<comment type="function">
    <text evidence="1">Catalyzes the condensation of iminoaspartate with dihydroxyacetone phosphate to form quinolinate.</text>
</comment>
<comment type="catalytic activity">
    <reaction evidence="1">
        <text>iminosuccinate + dihydroxyacetone phosphate = quinolinate + phosphate + 2 H2O + H(+)</text>
        <dbReference type="Rhea" id="RHEA:25888"/>
        <dbReference type="ChEBI" id="CHEBI:15377"/>
        <dbReference type="ChEBI" id="CHEBI:15378"/>
        <dbReference type="ChEBI" id="CHEBI:29959"/>
        <dbReference type="ChEBI" id="CHEBI:43474"/>
        <dbReference type="ChEBI" id="CHEBI:57642"/>
        <dbReference type="ChEBI" id="CHEBI:77875"/>
        <dbReference type="EC" id="2.5.1.72"/>
    </reaction>
    <physiologicalReaction direction="left-to-right" evidence="1">
        <dbReference type="Rhea" id="RHEA:25889"/>
    </physiologicalReaction>
</comment>
<comment type="cofactor">
    <cofactor evidence="1">
        <name>[4Fe-4S] cluster</name>
        <dbReference type="ChEBI" id="CHEBI:49883"/>
    </cofactor>
    <text evidence="1">Binds 1 [4Fe-4S] cluster per subunit.</text>
</comment>
<comment type="pathway">
    <text evidence="1">Cofactor biosynthesis; NAD(+) biosynthesis; quinolinate from iminoaspartate: step 1/1.</text>
</comment>
<comment type="subcellular location">
    <subcellularLocation>
        <location evidence="1">Cytoplasm</location>
    </subcellularLocation>
</comment>
<comment type="similarity">
    <text evidence="1">Belongs to the quinolinate synthase family. Type 2 subfamily.</text>
</comment>
<evidence type="ECO:0000255" key="1">
    <source>
        <dbReference type="HAMAP-Rule" id="MF_00568"/>
    </source>
</evidence>
<feature type="chain" id="PRO_1000129446" description="Quinolinate synthase">
    <location>
        <begin position="1"/>
        <end position="302"/>
    </location>
</feature>
<feature type="binding site" evidence="1">
    <location>
        <position position="24"/>
    </location>
    <ligand>
        <name>iminosuccinate</name>
        <dbReference type="ChEBI" id="CHEBI:77875"/>
    </ligand>
</feature>
<feature type="binding site" evidence="1">
    <location>
        <position position="41"/>
    </location>
    <ligand>
        <name>iminosuccinate</name>
        <dbReference type="ChEBI" id="CHEBI:77875"/>
    </ligand>
</feature>
<feature type="binding site" evidence="1">
    <location>
        <position position="86"/>
    </location>
    <ligand>
        <name>[4Fe-4S] cluster</name>
        <dbReference type="ChEBI" id="CHEBI:49883"/>
    </ligand>
</feature>
<feature type="binding site" evidence="1">
    <location>
        <begin position="112"/>
        <end position="114"/>
    </location>
    <ligand>
        <name>iminosuccinate</name>
        <dbReference type="ChEBI" id="CHEBI:77875"/>
    </ligand>
</feature>
<feature type="binding site" evidence="1">
    <location>
        <position position="129"/>
    </location>
    <ligand>
        <name>iminosuccinate</name>
        <dbReference type="ChEBI" id="CHEBI:77875"/>
    </ligand>
</feature>
<feature type="binding site" evidence="1">
    <location>
        <position position="173"/>
    </location>
    <ligand>
        <name>[4Fe-4S] cluster</name>
        <dbReference type="ChEBI" id="CHEBI:49883"/>
    </ligand>
</feature>
<feature type="binding site" evidence="1">
    <location>
        <begin position="199"/>
        <end position="201"/>
    </location>
    <ligand>
        <name>iminosuccinate</name>
        <dbReference type="ChEBI" id="CHEBI:77875"/>
    </ligand>
</feature>
<feature type="binding site" evidence="1">
    <location>
        <position position="216"/>
    </location>
    <ligand>
        <name>iminosuccinate</name>
        <dbReference type="ChEBI" id="CHEBI:77875"/>
    </ligand>
</feature>
<feature type="binding site" evidence="1">
    <location>
        <position position="259"/>
    </location>
    <ligand>
        <name>[4Fe-4S] cluster</name>
        <dbReference type="ChEBI" id="CHEBI:49883"/>
    </ligand>
</feature>
<organism>
    <name type="scientific">Thermococcus onnurineus (strain NA1)</name>
    <dbReference type="NCBI Taxonomy" id="523850"/>
    <lineage>
        <taxon>Archaea</taxon>
        <taxon>Methanobacteriati</taxon>
        <taxon>Methanobacteriota</taxon>
        <taxon>Thermococci</taxon>
        <taxon>Thermococcales</taxon>
        <taxon>Thermococcaceae</taxon>
        <taxon>Thermococcus</taxon>
    </lineage>
</organism>
<sequence>MKMEELVREIERLKEERNAIIMAHNYQLPEIQDIADFLGDSLELARKAVNVDADVIVFVGVDFMAETAKILNPEKTVLLPTRRATCAMANMLKVEHILKAKEQYPDAPVVLYVNTTAETKAYADVTVTSANAVRIVEKLDSDVIIFGPDKNLASYVAKMTGKKVIPVPEYGHCYVHRQFTLEDVERARKLYPNAKLMVHPECEPEVQERADIIVSTGGMIRRAPEHDEWVVFTEREMVYRLQRLYPDIKFHPAKEDAICIGMKAITLNHIYESLRDMKYEVEVPEDIAEKARRAIERMLEMS</sequence>
<dbReference type="EC" id="2.5.1.72" evidence="1"/>
<dbReference type="EMBL" id="CP000855">
    <property type="protein sequence ID" value="ACJ17378.1"/>
    <property type="molecule type" value="Genomic_DNA"/>
</dbReference>
<dbReference type="RefSeq" id="WP_012572850.1">
    <property type="nucleotide sequence ID" value="NC_011529.1"/>
</dbReference>
<dbReference type="SMR" id="B6YVQ4"/>
<dbReference type="STRING" id="523850.TON_1887"/>
<dbReference type="GeneID" id="7017559"/>
<dbReference type="KEGG" id="ton:TON_1887"/>
<dbReference type="PATRIC" id="fig|523850.10.peg.1901"/>
<dbReference type="eggNOG" id="arCOG04459">
    <property type="taxonomic scope" value="Archaea"/>
</dbReference>
<dbReference type="HOGENOM" id="CLU_047382_0_0_2"/>
<dbReference type="OrthoDB" id="5931at2157"/>
<dbReference type="UniPathway" id="UPA00253">
    <property type="reaction ID" value="UER00327"/>
</dbReference>
<dbReference type="Proteomes" id="UP000002727">
    <property type="component" value="Chromosome"/>
</dbReference>
<dbReference type="GO" id="GO:0005737">
    <property type="term" value="C:cytoplasm"/>
    <property type="evidence" value="ECO:0007669"/>
    <property type="project" value="UniProtKB-SubCell"/>
</dbReference>
<dbReference type="GO" id="GO:0051539">
    <property type="term" value="F:4 iron, 4 sulfur cluster binding"/>
    <property type="evidence" value="ECO:0007669"/>
    <property type="project" value="UniProtKB-KW"/>
</dbReference>
<dbReference type="GO" id="GO:0046872">
    <property type="term" value="F:metal ion binding"/>
    <property type="evidence" value="ECO:0007669"/>
    <property type="project" value="UniProtKB-KW"/>
</dbReference>
<dbReference type="GO" id="GO:0008987">
    <property type="term" value="F:quinolinate synthetase A activity"/>
    <property type="evidence" value="ECO:0007669"/>
    <property type="project" value="UniProtKB-UniRule"/>
</dbReference>
<dbReference type="GO" id="GO:0034628">
    <property type="term" value="P:'de novo' NAD biosynthetic process from L-aspartate"/>
    <property type="evidence" value="ECO:0007669"/>
    <property type="project" value="TreeGrafter"/>
</dbReference>
<dbReference type="Gene3D" id="3.40.50.10800">
    <property type="entry name" value="NadA-like"/>
    <property type="match status" value="3"/>
</dbReference>
<dbReference type="HAMAP" id="MF_00568">
    <property type="entry name" value="NadA_type2"/>
    <property type="match status" value="1"/>
</dbReference>
<dbReference type="InterPro" id="IPR003473">
    <property type="entry name" value="NadA"/>
</dbReference>
<dbReference type="InterPro" id="IPR036094">
    <property type="entry name" value="NadA_sf"/>
</dbReference>
<dbReference type="InterPro" id="IPR023066">
    <property type="entry name" value="Quinolinate_synth_type2"/>
</dbReference>
<dbReference type="NCBIfam" id="TIGR00550">
    <property type="entry name" value="nadA"/>
    <property type="match status" value="1"/>
</dbReference>
<dbReference type="NCBIfam" id="NF006878">
    <property type="entry name" value="PRK09375.1-2"/>
    <property type="match status" value="1"/>
</dbReference>
<dbReference type="PANTHER" id="PTHR30573:SF0">
    <property type="entry name" value="QUINOLINATE SYNTHASE, CHLOROPLASTIC"/>
    <property type="match status" value="1"/>
</dbReference>
<dbReference type="PANTHER" id="PTHR30573">
    <property type="entry name" value="QUINOLINATE SYNTHETASE A"/>
    <property type="match status" value="1"/>
</dbReference>
<dbReference type="Pfam" id="PF02445">
    <property type="entry name" value="NadA"/>
    <property type="match status" value="1"/>
</dbReference>
<dbReference type="SUPFAM" id="SSF142754">
    <property type="entry name" value="NadA-like"/>
    <property type="match status" value="1"/>
</dbReference>
<name>NADA_THEON</name>
<proteinExistence type="inferred from homology"/>